<protein>
    <recommendedName>
        <fullName evidence="1">ATP synthase subunit delta</fullName>
    </recommendedName>
    <alternativeName>
        <fullName evidence="1">ATP synthase F(1) sector subunit delta</fullName>
    </alternativeName>
    <alternativeName>
        <fullName evidence="1">F-type ATPase subunit delta</fullName>
        <shortName evidence="1">F-ATPase subunit delta</shortName>
    </alternativeName>
</protein>
<sequence>MSDSASISSGIADRYATAIFELAKEENNIGALEAGADLLDAALKESAEFRDLISSPVYSRDEQAGAIGAIAKKLELAPMLSNALALMASKRRLFVLPQLVASLRALIAEEKGEMTADVISAQPLSKANLDELTKVLSASADKTVKVNATVDNSLIGGLVVKMGSKMIDTSIRAKLNALQNTMKEVG</sequence>
<gene>
    <name evidence="1" type="primary">atpH</name>
    <name type="ordered locus">Dshi_2937</name>
</gene>
<proteinExistence type="inferred from homology"/>
<name>ATPD_DINSH</name>
<evidence type="ECO:0000255" key="1">
    <source>
        <dbReference type="HAMAP-Rule" id="MF_01416"/>
    </source>
</evidence>
<comment type="function">
    <text evidence="1">F(1)F(0) ATP synthase produces ATP from ADP in the presence of a proton or sodium gradient. F-type ATPases consist of two structural domains, F(1) containing the extramembraneous catalytic core and F(0) containing the membrane proton channel, linked together by a central stalk and a peripheral stalk. During catalysis, ATP synthesis in the catalytic domain of F(1) is coupled via a rotary mechanism of the central stalk subunits to proton translocation.</text>
</comment>
<comment type="function">
    <text evidence="1">This protein is part of the stalk that links CF(0) to CF(1). It either transmits conformational changes from CF(0) to CF(1) or is implicated in proton conduction.</text>
</comment>
<comment type="subunit">
    <text evidence="1">F-type ATPases have 2 components, F(1) - the catalytic core - and F(0) - the membrane proton channel. F(1) has five subunits: alpha(3), beta(3), gamma(1), delta(1), epsilon(1). CF(0) has four main subunits: a(1), b(1), b'(1) and c(10-14). The alpha and beta chains form an alternating ring which encloses part of the gamma chain. F(1) is attached to F(0) by a central stalk formed by the gamma and epsilon chains, while a peripheral stalk is formed by the delta, b and b' chains.</text>
</comment>
<comment type="subcellular location">
    <subcellularLocation>
        <location evidence="1">Cell inner membrane</location>
        <topology evidence="1">Peripheral membrane protein</topology>
    </subcellularLocation>
</comment>
<comment type="similarity">
    <text evidence="1">Belongs to the ATPase delta chain family.</text>
</comment>
<organism>
    <name type="scientific">Dinoroseobacter shibae (strain DSM 16493 / NCIMB 14021 / DFL 12)</name>
    <dbReference type="NCBI Taxonomy" id="398580"/>
    <lineage>
        <taxon>Bacteria</taxon>
        <taxon>Pseudomonadati</taxon>
        <taxon>Pseudomonadota</taxon>
        <taxon>Alphaproteobacteria</taxon>
        <taxon>Rhodobacterales</taxon>
        <taxon>Roseobacteraceae</taxon>
        <taxon>Dinoroseobacter</taxon>
    </lineage>
</organism>
<dbReference type="EMBL" id="CP000830">
    <property type="protein sequence ID" value="ABV94670.1"/>
    <property type="molecule type" value="Genomic_DNA"/>
</dbReference>
<dbReference type="RefSeq" id="WP_012179598.1">
    <property type="nucleotide sequence ID" value="NC_009952.1"/>
</dbReference>
<dbReference type="SMR" id="A8LJR7"/>
<dbReference type="STRING" id="398580.Dshi_2937"/>
<dbReference type="KEGG" id="dsh:Dshi_2937"/>
<dbReference type="eggNOG" id="COG0712">
    <property type="taxonomic scope" value="Bacteria"/>
</dbReference>
<dbReference type="HOGENOM" id="CLU_085114_0_1_5"/>
<dbReference type="Proteomes" id="UP000006833">
    <property type="component" value="Chromosome"/>
</dbReference>
<dbReference type="GO" id="GO:0005886">
    <property type="term" value="C:plasma membrane"/>
    <property type="evidence" value="ECO:0007669"/>
    <property type="project" value="UniProtKB-SubCell"/>
</dbReference>
<dbReference type="GO" id="GO:0045259">
    <property type="term" value="C:proton-transporting ATP synthase complex"/>
    <property type="evidence" value="ECO:0007669"/>
    <property type="project" value="UniProtKB-KW"/>
</dbReference>
<dbReference type="GO" id="GO:0046933">
    <property type="term" value="F:proton-transporting ATP synthase activity, rotational mechanism"/>
    <property type="evidence" value="ECO:0007669"/>
    <property type="project" value="UniProtKB-UniRule"/>
</dbReference>
<dbReference type="Gene3D" id="1.10.520.20">
    <property type="entry name" value="N-terminal domain of the delta subunit of the F1F0-ATP synthase"/>
    <property type="match status" value="1"/>
</dbReference>
<dbReference type="HAMAP" id="MF_01416">
    <property type="entry name" value="ATP_synth_delta_bact"/>
    <property type="match status" value="1"/>
</dbReference>
<dbReference type="InterPro" id="IPR026015">
    <property type="entry name" value="ATP_synth_OSCP/delta_N_sf"/>
</dbReference>
<dbReference type="InterPro" id="IPR020781">
    <property type="entry name" value="ATPase_OSCP/d_CS"/>
</dbReference>
<dbReference type="InterPro" id="IPR000711">
    <property type="entry name" value="ATPase_OSCP/dsu"/>
</dbReference>
<dbReference type="NCBIfam" id="TIGR01145">
    <property type="entry name" value="ATP_synt_delta"/>
    <property type="match status" value="1"/>
</dbReference>
<dbReference type="NCBIfam" id="NF004402">
    <property type="entry name" value="PRK05758.2-2"/>
    <property type="match status" value="1"/>
</dbReference>
<dbReference type="NCBIfam" id="NF004406">
    <property type="entry name" value="PRK05758.3-2"/>
    <property type="match status" value="1"/>
</dbReference>
<dbReference type="PANTHER" id="PTHR11910">
    <property type="entry name" value="ATP SYNTHASE DELTA CHAIN"/>
    <property type="match status" value="1"/>
</dbReference>
<dbReference type="Pfam" id="PF00213">
    <property type="entry name" value="OSCP"/>
    <property type="match status" value="1"/>
</dbReference>
<dbReference type="PRINTS" id="PR00125">
    <property type="entry name" value="ATPASEDELTA"/>
</dbReference>
<dbReference type="SUPFAM" id="SSF47928">
    <property type="entry name" value="N-terminal domain of the delta subunit of the F1F0-ATP synthase"/>
    <property type="match status" value="1"/>
</dbReference>
<dbReference type="PROSITE" id="PS00389">
    <property type="entry name" value="ATPASE_DELTA"/>
    <property type="match status" value="1"/>
</dbReference>
<accession>A8LJR7</accession>
<reference key="1">
    <citation type="journal article" date="2010" name="ISME J.">
        <title>The complete genome sequence of the algal symbiont Dinoroseobacter shibae: a hitchhiker's guide to life in the sea.</title>
        <authorList>
            <person name="Wagner-Dobler I."/>
            <person name="Ballhausen B."/>
            <person name="Berger M."/>
            <person name="Brinkhoff T."/>
            <person name="Buchholz I."/>
            <person name="Bunk B."/>
            <person name="Cypionka H."/>
            <person name="Daniel R."/>
            <person name="Drepper T."/>
            <person name="Gerdts G."/>
            <person name="Hahnke S."/>
            <person name="Han C."/>
            <person name="Jahn D."/>
            <person name="Kalhoefer D."/>
            <person name="Kiss H."/>
            <person name="Klenk H.P."/>
            <person name="Kyrpides N."/>
            <person name="Liebl W."/>
            <person name="Liesegang H."/>
            <person name="Meincke L."/>
            <person name="Pati A."/>
            <person name="Petersen J."/>
            <person name="Piekarski T."/>
            <person name="Pommerenke C."/>
            <person name="Pradella S."/>
            <person name="Pukall R."/>
            <person name="Rabus R."/>
            <person name="Stackebrandt E."/>
            <person name="Thole S."/>
            <person name="Thompson L."/>
            <person name="Tielen P."/>
            <person name="Tomasch J."/>
            <person name="von Jan M."/>
            <person name="Wanphrut N."/>
            <person name="Wichels A."/>
            <person name="Zech H."/>
            <person name="Simon M."/>
        </authorList>
    </citation>
    <scope>NUCLEOTIDE SEQUENCE [LARGE SCALE GENOMIC DNA]</scope>
    <source>
        <strain>DSM 16493 / NCIMB 14021 / DFL 12</strain>
    </source>
</reference>
<keyword id="KW-0066">ATP synthesis</keyword>
<keyword id="KW-0997">Cell inner membrane</keyword>
<keyword id="KW-1003">Cell membrane</keyword>
<keyword id="KW-0139">CF(1)</keyword>
<keyword id="KW-0375">Hydrogen ion transport</keyword>
<keyword id="KW-0406">Ion transport</keyword>
<keyword id="KW-0472">Membrane</keyword>
<keyword id="KW-1185">Reference proteome</keyword>
<keyword id="KW-0813">Transport</keyword>
<feature type="chain" id="PRO_1000184695" description="ATP synthase subunit delta">
    <location>
        <begin position="1"/>
        <end position="186"/>
    </location>
</feature>